<gene>
    <name type="primary">NUDCD3</name>
    <name type="synonym">KIAA1068</name>
</gene>
<accession>Q8IVD9</accession>
<accession>Q9BTI3</accession>
<accession>Q9H7W9</accession>
<accession>Q9UPT4</accession>
<protein>
    <recommendedName>
        <fullName>NudC domain-containing protein 3</fullName>
    </recommendedName>
</protein>
<comment type="interaction">
    <interactant intactId="EBI-744342">
        <id>Q8IVD9</id>
    </interactant>
    <interactant intactId="EBI-764342">
        <id>Q9H2C0</id>
        <label>GAN</label>
    </interactant>
    <organismsDiffer>false</organismsDiffer>
    <experiments>5</experiments>
</comment>
<comment type="interaction">
    <interactant intactId="EBI-744342">
        <id>Q8IVD9</id>
    </interactant>
    <interactant intactId="EBI-592728">
        <id>Q9Y5Z7</id>
        <label>HCFC2</label>
    </interactant>
    <organismsDiffer>false</organismsDiffer>
    <experiments>5</experiments>
</comment>
<comment type="interaction">
    <interactant intactId="EBI-744342">
        <id>Q8IVD9</id>
    </interactant>
    <interactant intactId="EBI-3201175">
        <id>Q6PID8</id>
        <label>KLHDC10</label>
    </interactant>
    <organismsDiffer>false</organismsDiffer>
    <experiments>2</experiments>
</comment>
<comment type="interaction">
    <interactant intactId="EBI-744342">
        <id>Q8IVD9</id>
    </interactant>
    <interactant intactId="EBI-715326">
        <id>Q9Y2U9</id>
        <label>KLHDC2</label>
    </interactant>
    <organismsDiffer>false</organismsDiffer>
    <experiments>3</experiments>
</comment>
<comment type="interaction">
    <interactant intactId="EBI-744342">
        <id>Q8IVD9</id>
    </interactant>
    <interactant intactId="EBI-9477915">
        <id>Q8IYD2</id>
        <label>KLHDC8A</label>
    </interactant>
    <organismsDiffer>false</organismsDiffer>
    <experiments>3</experiments>
</comment>
<comment type="interaction">
    <interactant intactId="EBI-744342">
        <id>Q8IVD9</id>
    </interactant>
    <interactant intactId="EBI-6426228">
        <id>Q9NR64</id>
        <label>KLHL1</label>
    </interactant>
    <organismsDiffer>false</organismsDiffer>
    <experiments>2</experiments>
</comment>
<comment type="interaction">
    <interactant intactId="EBI-744342">
        <id>Q8IVD9</id>
    </interactant>
    <interactant intactId="EBI-2510129">
        <id>Q96M94</id>
        <label>KLHL15</label>
    </interactant>
    <organismsDiffer>false</organismsDiffer>
    <experiments>3</experiments>
</comment>
<comment type="interaction">
    <interactant intactId="EBI-744342">
        <id>Q8IVD9</id>
    </interactant>
    <interactant intactId="EBI-1996072">
        <id>Q53GT1</id>
        <label>KLHL22</label>
    </interactant>
    <organismsDiffer>false</organismsDiffer>
    <experiments>4</experiments>
</comment>
<comment type="interaction">
    <interactant intactId="EBI-744342">
        <id>Q8IVD9</id>
    </interactant>
    <interactant intactId="EBI-2512246">
        <id>Q8NBE8</id>
        <label>KLHL23</label>
    </interactant>
    <organismsDiffer>false</organismsDiffer>
    <experiments>3</experiments>
</comment>
<comment type="interaction">
    <interactant intactId="EBI-744342">
        <id>Q8IVD9</id>
    </interactant>
    <interactant intactId="EBI-724915">
        <id>Q53HC5</id>
        <label>KLHL26</label>
    </interactant>
    <organismsDiffer>false</organismsDiffer>
    <experiments>3</experiments>
</comment>
<comment type="interaction">
    <interactant intactId="EBI-744342">
        <id>Q8IVD9</id>
    </interactant>
    <interactant intactId="EBI-6426370">
        <id>Q96CT2</id>
        <label>KLHL29</label>
    </interactant>
    <organismsDiffer>false</organismsDiffer>
    <experiments>3</experiments>
</comment>
<comment type="interaction">
    <interactant intactId="EBI-744342">
        <id>Q8IVD9</id>
    </interactant>
    <interactant intactId="EBI-6426443">
        <id>Q2WGJ6</id>
        <label>KLHL38</label>
    </interactant>
    <organismsDiffer>false</organismsDiffer>
    <experiments>2</experiments>
</comment>
<comment type="interaction">
    <interactant intactId="EBI-744342">
        <id>Q8IVD9</id>
    </interactant>
    <interactant intactId="EBI-6426464">
        <id>Q8WZ60</id>
        <label>KLHL6</label>
    </interactant>
    <organismsDiffer>false</organismsDiffer>
    <experiments>3</experiments>
</comment>
<comment type="interaction">
    <interactant intactId="EBI-744342">
        <id>Q8IVD9</id>
    </interactant>
    <interactant intactId="EBI-720620">
        <id>P43034</id>
        <label>PAFAH1B1</label>
    </interactant>
    <organismsDiffer>false</organismsDiffer>
    <experiments>2</experiments>
</comment>
<comment type="interaction">
    <interactant intactId="EBI-744342">
        <id>Q8IVD9</id>
    </interactant>
    <interactant intactId="EBI-8634209">
        <id>Q6NSI4</id>
        <label>RADX</label>
    </interactant>
    <organismsDiffer>false</organismsDiffer>
    <experiments>2</experiments>
</comment>
<comment type="interaction">
    <interactant intactId="EBI-744342">
        <id>Q8IVD9</id>
    </interactant>
    <interactant intactId="EBI-346977">
        <id>Q15393</id>
        <label>SF3B3</label>
    </interactant>
    <organismsDiffer>false</organismsDiffer>
    <experiments>2</experiments>
</comment>
<comment type="sequence caution" evidence="4">
    <conflict type="erroneous initiation">
        <sequence resource="EMBL-CDS" id="AAH03691"/>
    </conflict>
</comment>
<comment type="sequence caution" evidence="4">
    <conflict type="erroneous gene model prediction">
        <sequence resource="EMBL-CDS" id="AAQ96892"/>
    </conflict>
</comment>
<comment type="sequence caution" evidence="4">
    <conflict type="erroneous initiation">
        <sequence resource="EMBL-CDS" id="BAB14855"/>
    </conflict>
</comment>
<proteinExistence type="evidence at protein level"/>
<evidence type="ECO:0000255" key="1">
    <source>
        <dbReference type="PROSITE-ProRule" id="PRU00547"/>
    </source>
</evidence>
<evidence type="ECO:0000256" key="2">
    <source>
        <dbReference type="SAM" id="MobiDB-lite"/>
    </source>
</evidence>
<evidence type="ECO:0000269" key="3">
    <source>
    </source>
</evidence>
<evidence type="ECO:0000305" key="4"/>
<evidence type="ECO:0007744" key="5">
    <source>
    </source>
</evidence>
<evidence type="ECO:0007744" key="6">
    <source>
    </source>
</evidence>
<evidence type="ECO:0007744" key="7">
    <source>
    </source>
</evidence>
<evidence type="ECO:0007744" key="8">
    <source>
    </source>
</evidence>
<evidence type="ECO:0007829" key="9">
    <source>
        <dbReference type="PDB" id="1WGV"/>
    </source>
</evidence>
<dbReference type="EMBL" id="AC004453">
    <property type="protein sequence ID" value="AAQ96892.1"/>
    <property type="status" value="ALT_SEQ"/>
    <property type="molecule type" value="Genomic_DNA"/>
</dbReference>
<dbReference type="EMBL" id="BC003691">
    <property type="protein sequence ID" value="AAH03691.1"/>
    <property type="status" value="ALT_INIT"/>
    <property type="molecule type" value="mRNA"/>
</dbReference>
<dbReference type="EMBL" id="BC011673">
    <property type="protein sequence ID" value="AAH11673.2"/>
    <property type="molecule type" value="mRNA"/>
</dbReference>
<dbReference type="EMBL" id="BC035014">
    <property type="protein sequence ID" value="AAH35014.1"/>
    <property type="molecule type" value="mRNA"/>
</dbReference>
<dbReference type="EMBL" id="AB028991">
    <property type="protein sequence ID" value="BAA83020.1"/>
    <property type="molecule type" value="mRNA"/>
</dbReference>
<dbReference type="EMBL" id="AK024226">
    <property type="protein sequence ID" value="BAB14855.1"/>
    <property type="status" value="ALT_INIT"/>
    <property type="molecule type" value="mRNA"/>
</dbReference>
<dbReference type="CCDS" id="CCDS5490.2"/>
<dbReference type="RefSeq" id="NP_056147.2">
    <property type="nucleotide sequence ID" value="NM_015332.4"/>
</dbReference>
<dbReference type="PDB" id="1WGV">
    <property type="method" value="NMR"/>
    <property type="chains" value="A=176-286"/>
</dbReference>
<dbReference type="PDBsum" id="1WGV"/>
<dbReference type="BMRB" id="Q8IVD9"/>
<dbReference type="SMR" id="Q8IVD9"/>
<dbReference type="BioGRID" id="116962">
    <property type="interactions" value="160"/>
</dbReference>
<dbReference type="CORUM" id="Q8IVD9"/>
<dbReference type="DIP" id="DIP-53643N"/>
<dbReference type="FunCoup" id="Q8IVD9">
    <property type="interactions" value="1298"/>
</dbReference>
<dbReference type="IntAct" id="Q8IVD9">
    <property type="interactions" value="166"/>
</dbReference>
<dbReference type="MINT" id="Q8IVD9"/>
<dbReference type="STRING" id="9606.ENSP00000347626"/>
<dbReference type="GlyGen" id="Q8IVD9">
    <property type="glycosylation" value="1 site, 1 O-linked glycan (1 site)"/>
</dbReference>
<dbReference type="iPTMnet" id="Q8IVD9"/>
<dbReference type="MetOSite" id="Q8IVD9"/>
<dbReference type="PhosphoSitePlus" id="Q8IVD9"/>
<dbReference type="BioMuta" id="NUDCD3"/>
<dbReference type="DMDM" id="145559509"/>
<dbReference type="jPOST" id="Q8IVD9"/>
<dbReference type="MassIVE" id="Q8IVD9"/>
<dbReference type="PaxDb" id="9606-ENSP00000347626"/>
<dbReference type="PeptideAtlas" id="Q8IVD9"/>
<dbReference type="ProteomicsDB" id="70681"/>
<dbReference type="Pumba" id="Q8IVD9"/>
<dbReference type="Antibodypedia" id="13393">
    <property type="antibodies" value="99 antibodies from 25 providers"/>
</dbReference>
<dbReference type="DNASU" id="23386"/>
<dbReference type="Ensembl" id="ENST00000355451.8">
    <property type="protein sequence ID" value="ENSP00000347626.6"/>
    <property type="gene ID" value="ENSG00000015676.18"/>
</dbReference>
<dbReference type="GeneID" id="23386"/>
<dbReference type="KEGG" id="hsa:23386"/>
<dbReference type="MANE-Select" id="ENST00000355451.8">
    <property type="protein sequence ID" value="ENSP00000347626.6"/>
    <property type="RefSeq nucleotide sequence ID" value="NM_015332.4"/>
    <property type="RefSeq protein sequence ID" value="NP_056147.2"/>
</dbReference>
<dbReference type="UCSC" id="uc003tkz.4">
    <property type="organism name" value="human"/>
</dbReference>
<dbReference type="AGR" id="HGNC:22208"/>
<dbReference type="CTD" id="23386"/>
<dbReference type="DisGeNET" id="23386"/>
<dbReference type="GeneCards" id="NUDCD3"/>
<dbReference type="HGNC" id="HGNC:22208">
    <property type="gene designation" value="NUDCD3"/>
</dbReference>
<dbReference type="HPA" id="ENSG00000015676">
    <property type="expression patterns" value="Low tissue specificity"/>
</dbReference>
<dbReference type="MIM" id="610296">
    <property type="type" value="gene"/>
</dbReference>
<dbReference type="neXtProt" id="NX_Q8IVD9"/>
<dbReference type="OpenTargets" id="ENSG00000015676"/>
<dbReference type="PharmGKB" id="PA134989375"/>
<dbReference type="VEuPathDB" id="HostDB:ENSG00000015676"/>
<dbReference type="eggNOG" id="KOG2265">
    <property type="taxonomic scope" value="Eukaryota"/>
</dbReference>
<dbReference type="GeneTree" id="ENSGT00940000158444"/>
<dbReference type="HOGENOM" id="CLU_047332_0_0_1"/>
<dbReference type="InParanoid" id="Q8IVD9"/>
<dbReference type="OMA" id="EINIEMP"/>
<dbReference type="OrthoDB" id="416217at2759"/>
<dbReference type="PAN-GO" id="Q8IVD9">
    <property type="GO annotations" value="3 GO annotations based on evolutionary models"/>
</dbReference>
<dbReference type="PhylomeDB" id="Q8IVD9"/>
<dbReference type="TreeFam" id="TF300147"/>
<dbReference type="PathwayCommons" id="Q8IVD9"/>
<dbReference type="SignaLink" id="Q8IVD9"/>
<dbReference type="BioGRID-ORCS" id="23386">
    <property type="hits" value="410 hits in 1159 CRISPR screens"/>
</dbReference>
<dbReference type="ChiTaRS" id="NUDCD3">
    <property type="organism name" value="human"/>
</dbReference>
<dbReference type="EvolutionaryTrace" id="Q8IVD9"/>
<dbReference type="GeneWiki" id="NUDCD3_(gene)"/>
<dbReference type="GenomeRNAi" id="23386"/>
<dbReference type="Pharos" id="Q8IVD9">
    <property type="development level" value="Tbio"/>
</dbReference>
<dbReference type="PRO" id="PR:Q8IVD9"/>
<dbReference type="Proteomes" id="UP000005640">
    <property type="component" value="Chromosome 7"/>
</dbReference>
<dbReference type="RNAct" id="Q8IVD9">
    <property type="molecule type" value="protein"/>
</dbReference>
<dbReference type="Bgee" id="ENSG00000015676">
    <property type="expression patterns" value="Expressed in cortical plate and 201 other cell types or tissues"/>
</dbReference>
<dbReference type="GO" id="GO:0005737">
    <property type="term" value="C:cytoplasm"/>
    <property type="evidence" value="ECO:0000318"/>
    <property type="project" value="GO_Central"/>
</dbReference>
<dbReference type="GO" id="GO:0005868">
    <property type="term" value="C:cytoplasmic dynein complex"/>
    <property type="evidence" value="ECO:0000314"/>
    <property type="project" value="GO_Central"/>
</dbReference>
<dbReference type="GO" id="GO:0051082">
    <property type="term" value="F:unfolded protein binding"/>
    <property type="evidence" value="ECO:0000318"/>
    <property type="project" value="GO_Central"/>
</dbReference>
<dbReference type="GO" id="GO:0060271">
    <property type="term" value="P:cilium assembly"/>
    <property type="evidence" value="ECO:0000315"/>
    <property type="project" value="GO_Central"/>
</dbReference>
<dbReference type="GO" id="GO:0006457">
    <property type="term" value="P:protein folding"/>
    <property type="evidence" value="ECO:0000318"/>
    <property type="project" value="GO_Central"/>
</dbReference>
<dbReference type="GO" id="GO:1905793">
    <property type="term" value="P:protein localization to pericentriolar material"/>
    <property type="evidence" value="ECO:0000315"/>
    <property type="project" value="GO_Central"/>
</dbReference>
<dbReference type="CDD" id="cd06495">
    <property type="entry name" value="p23_NUDCD3_like"/>
    <property type="match status" value="1"/>
</dbReference>
<dbReference type="FunFam" id="2.60.40.790:FF:000023">
    <property type="entry name" value="NudC domain-containing protein 3"/>
    <property type="match status" value="1"/>
</dbReference>
<dbReference type="Gene3D" id="2.60.40.790">
    <property type="match status" value="1"/>
</dbReference>
<dbReference type="InterPro" id="IPR007052">
    <property type="entry name" value="CS_dom"/>
</dbReference>
<dbReference type="InterPro" id="IPR008978">
    <property type="entry name" value="HSP20-like_chaperone"/>
</dbReference>
<dbReference type="InterPro" id="IPR037898">
    <property type="entry name" value="NudC_fam"/>
</dbReference>
<dbReference type="InterPro" id="IPR025934">
    <property type="entry name" value="NudC_N_dom"/>
</dbReference>
<dbReference type="InterPro" id="IPR037905">
    <property type="entry name" value="p23_NUDCD3"/>
</dbReference>
<dbReference type="PANTHER" id="PTHR12356">
    <property type="entry name" value="NUCLEAR MOVEMENT PROTEIN NUDC"/>
    <property type="match status" value="1"/>
</dbReference>
<dbReference type="PANTHER" id="PTHR12356:SF19">
    <property type="entry name" value="NUDC DOMAIN-CONTAINING PROTEIN 3"/>
    <property type="match status" value="1"/>
</dbReference>
<dbReference type="Pfam" id="PF04969">
    <property type="entry name" value="CS"/>
    <property type="match status" value="1"/>
</dbReference>
<dbReference type="Pfam" id="PF14050">
    <property type="entry name" value="Nudc_N"/>
    <property type="match status" value="1"/>
</dbReference>
<dbReference type="SUPFAM" id="SSF49764">
    <property type="entry name" value="HSP20-like chaperones"/>
    <property type="match status" value="1"/>
</dbReference>
<dbReference type="PROSITE" id="PS51203">
    <property type="entry name" value="CS"/>
    <property type="match status" value="1"/>
</dbReference>
<sequence>METGAAELYDQALLGILQHVGNVQDFLRVLFGFLYRKTDFYRLLRHPSDRMGFPPGAAQALVLQVFKTFDHMARQDDEKRRQELEEKIRRKEEEEAKTVSAAAAEKEPVPVPVQEIEIDSTTELDGHQEVEKVQPPGPVKEMAHGSQEAEAPGAVAGAAEVPREPPILPRIQEQFQKNPDSYNGAVRENYTWSQDYTDLEVRVPVPKHVVKGKQVSVALSSSSIRVAMLEENGERVLMEGKLTHKINTESSLWSLEPGKCVLVNLSKVGEYWWNAILEGEEPIDIDKINKERSMATVDEEEQAVLDRLTFDYHQKLQGKPQSHELKVHEMLKKGWDAEGSPFRGQRFDPAMFNISPGAVQF</sequence>
<reference key="1">
    <citation type="journal article" date="2003" name="Nature">
        <title>The DNA sequence of human chromosome 7.</title>
        <authorList>
            <person name="Hillier L.W."/>
            <person name="Fulton R.S."/>
            <person name="Fulton L.A."/>
            <person name="Graves T.A."/>
            <person name="Pepin K.H."/>
            <person name="Wagner-McPherson C."/>
            <person name="Layman D."/>
            <person name="Maas J."/>
            <person name="Jaeger S."/>
            <person name="Walker R."/>
            <person name="Wylie K."/>
            <person name="Sekhon M."/>
            <person name="Becker M.C."/>
            <person name="O'Laughlin M.D."/>
            <person name="Schaller M.E."/>
            <person name="Fewell G.A."/>
            <person name="Delehaunty K.D."/>
            <person name="Miner T.L."/>
            <person name="Nash W.E."/>
            <person name="Cordes M."/>
            <person name="Du H."/>
            <person name="Sun H."/>
            <person name="Edwards J."/>
            <person name="Bradshaw-Cordum H."/>
            <person name="Ali J."/>
            <person name="Andrews S."/>
            <person name="Isak A."/>
            <person name="Vanbrunt A."/>
            <person name="Nguyen C."/>
            <person name="Du F."/>
            <person name="Lamar B."/>
            <person name="Courtney L."/>
            <person name="Kalicki J."/>
            <person name="Ozersky P."/>
            <person name="Bielicki L."/>
            <person name="Scott K."/>
            <person name="Holmes A."/>
            <person name="Harkins R."/>
            <person name="Harris A."/>
            <person name="Strong C.M."/>
            <person name="Hou S."/>
            <person name="Tomlinson C."/>
            <person name="Dauphin-Kohlberg S."/>
            <person name="Kozlowicz-Reilly A."/>
            <person name="Leonard S."/>
            <person name="Rohlfing T."/>
            <person name="Rock S.M."/>
            <person name="Tin-Wollam A.-M."/>
            <person name="Abbott A."/>
            <person name="Minx P."/>
            <person name="Maupin R."/>
            <person name="Strowmatt C."/>
            <person name="Latreille P."/>
            <person name="Miller N."/>
            <person name="Johnson D."/>
            <person name="Murray J."/>
            <person name="Woessner J.P."/>
            <person name="Wendl M.C."/>
            <person name="Yang S.-P."/>
            <person name="Schultz B.R."/>
            <person name="Wallis J.W."/>
            <person name="Spieth J."/>
            <person name="Bieri T.A."/>
            <person name="Nelson J.O."/>
            <person name="Berkowicz N."/>
            <person name="Wohldmann P.E."/>
            <person name="Cook L.L."/>
            <person name="Hickenbotham M.T."/>
            <person name="Eldred J."/>
            <person name="Williams D."/>
            <person name="Bedell J.A."/>
            <person name="Mardis E.R."/>
            <person name="Clifton S.W."/>
            <person name="Chissoe S.L."/>
            <person name="Marra M.A."/>
            <person name="Raymond C."/>
            <person name="Haugen E."/>
            <person name="Gillett W."/>
            <person name="Zhou Y."/>
            <person name="James R."/>
            <person name="Phelps K."/>
            <person name="Iadanoto S."/>
            <person name="Bubb K."/>
            <person name="Simms E."/>
            <person name="Levy R."/>
            <person name="Clendenning J."/>
            <person name="Kaul R."/>
            <person name="Kent W.J."/>
            <person name="Furey T.S."/>
            <person name="Baertsch R.A."/>
            <person name="Brent M.R."/>
            <person name="Keibler E."/>
            <person name="Flicek P."/>
            <person name="Bork P."/>
            <person name="Suyama M."/>
            <person name="Bailey J.A."/>
            <person name="Portnoy M.E."/>
            <person name="Torrents D."/>
            <person name="Chinwalla A.T."/>
            <person name="Gish W.R."/>
            <person name="Eddy S.R."/>
            <person name="McPherson J.D."/>
            <person name="Olson M.V."/>
            <person name="Eichler E.E."/>
            <person name="Green E.D."/>
            <person name="Waterston R.H."/>
            <person name="Wilson R.K."/>
        </authorList>
    </citation>
    <scope>NUCLEOTIDE SEQUENCE [LARGE SCALE GENOMIC DNA]</scope>
</reference>
<reference key="2">
    <citation type="journal article" date="2004" name="Genome Res.">
        <title>The status, quality, and expansion of the NIH full-length cDNA project: the Mammalian Gene Collection (MGC).</title>
        <authorList>
            <consortium name="The MGC Project Team"/>
        </authorList>
    </citation>
    <scope>NUCLEOTIDE SEQUENCE [LARGE SCALE MRNA]</scope>
    <scope>VARIANTS PRO-3 AND CYS-235</scope>
    <source>
        <tissue>Brain</tissue>
        <tissue>Pancreas</tissue>
        <tissue>Placenta</tissue>
    </source>
</reference>
<reference key="3">
    <citation type="journal article" date="1999" name="DNA Res.">
        <title>Prediction of the coding sequences of unidentified human genes. XIV. The complete sequences of 100 new cDNA clones from brain which code for large proteins in vitro.</title>
        <authorList>
            <person name="Kikuno R."/>
            <person name="Nagase T."/>
            <person name="Ishikawa K."/>
            <person name="Hirosawa M."/>
            <person name="Miyajima N."/>
            <person name="Tanaka A."/>
            <person name="Kotani H."/>
            <person name="Nomura N."/>
            <person name="Ohara O."/>
        </authorList>
    </citation>
    <scope>NUCLEOTIDE SEQUENCE [LARGE SCALE MRNA] OF 8-361</scope>
    <source>
        <tissue>Brain</tissue>
    </source>
</reference>
<reference key="4">
    <citation type="journal article" date="2004" name="Nat. Genet.">
        <title>Complete sequencing and characterization of 21,243 full-length human cDNAs.</title>
        <authorList>
            <person name="Ota T."/>
            <person name="Suzuki Y."/>
            <person name="Nishikawa T."/>
            <person name="Otsuki T."/>
            <person name="Sugiyama T."/>
            <person name="Irie R."/>
            <person name="Wakamatsu A."/>
            <person name="Hayashi K."/>
            <person name="Sato H."/>
            <person name="Nagai K."/>
            <person name="Kimura K."/>
            <person name="Makita H."/>
            <person name="Sekine M."/>
            <person name="Obayashi M."/>
            <person name="Nishi T."/>
            <person name="Shibahara T."/>
            <person name="Tanaka T."/>
            <person name="Ishii S."/>
            <person name="Yamamoto J."/>
            <person name="Saito K."/>
            <person name="Kawai Y."/>
            <person name="Isono Y."/>
            <person name="Nakamura Y."/>
            <person name="Nagahari K."/>
            <person name="Murakami K."/>
            <person name="Yasuda T."/>
            <person name="Iwayanagi T."/>
            <person name="Wagatsuma M."/>
            <person name="Shiratori A."/>
            <person name="Sudo H."/>
            <person name="Hosoiri T."/>
            <person name="Kaku Y."/>
            <person name="Kodaira H."/>
            <person name="Kondo H."/>
            <person name="Sugawara M."/>
            <person name="Takahashi M."/>
            <person name="Kanda K."/>
            <person name="Yokoi T."/>
            <person name="Furuya T."/>
            <person name="Kikkawa E."/>
            <person name="Omura Y."/>
            <person name="Abe K."/>
            <person name="Kamihara K."/>
            <person name="Katsuta N."/>
            <person name="Sato K."/>
            <person name="Tanikawa M."/>
            <person name="Yamazaki M."/>
            <person name="Ninomiya K."/>
            <person name="Ishibashi T."/>
            <person name="Yamashita H."/>
            <person name="Murakawa K."/>
            <person name="Fujimori K."/>
            <person name="Tanai H."/>
            <person name="Kimata M."/>
            <person name="Watanabe M."/>
            <person name="Hiraoka S."/>
            <person name="Chiba Y."/>
            <person name="Ishida S."/>
            <person name="Ono Y."/>
            <person name="Takiguchi S."/>
            <person name="Watanabe S."/>
            <person name="Yosida M."/>
            <person name="Hotuta T."/>
            <person name="Kusano J."/>
            <person name="Kanehori K."/>
            <person name="Takahashi-Fujii A."/>
            <person name="Hara H."/>
            <person name="Tanase T.-O."/>
            <person name="Nomura Y."/>
            <person name="Togiya S."/>
            <person name="Komai F."/>
            <person name="Hara R."/>
            <person name="Takeuchi K."/>
            <person name="Arita M."/>
            <person name="Imose N."/>
            <person name="Musashino K."/>
            <person name="Yuuki H."/>
            <person name="Oshima A."/>
            <person name="Sasaki N."/>
            <person name="Aotsuka S."/>
            <person name="Yoshikawa Y."/>
            <person name="Matsunawa H."/>
            <person name="Ichihara T."/>
            <person name="Shiohata N."/>
            <person name="Sano S."/>
            <person name="Moriya S."/>
            <person name="Momiyama H."/>
            <person name="Satoh N."/>
            <person name="Takami S."/>
            <person name="Terashima Y."/>
            <person name="Suzuki O."/>
            <person name="Nakagawa S."/>
            <person name="Senoh A."/>
            <person name="Mizoguchi H."/>
            <person name="Goto Y."/>
            <person name="Shimizu F."/>
            <person name="Wakebe H."/>
            <person name="Hishigaki H."/>
            <person name="Watanabe T."/>
            <person name="Sugiyama A."/>
            <person name="Takemoto M."/>
            <person name="Kawakami B."/>
            <person name="Yamazaki M."/>
            <person name="Watanabe K."/>
            <person name="Kumagai A."/>
            <person name="Itakura S."/>
            <person name="Fukuzumi Y."/>
            <person name="Fujimori Y."/>
            <person name="Komiyama M."/>
            <person name="Tashiro H."/>
            <person name="Tanigami A."/>
            <person name="Fujiwara T."/>
            <person name="Ono T."/>
            <person name="Yamada K."/>
            <person name="Fujii Y."/>
            <person name="Ozaki K."/>
            <person name="Hirao M."/>
            <person name="Ohmori Y."/>
            <person name="Kawabata A."/>
            <person name="Hikiji T."/>
            <person name="Kobatake N."/>
            <person name="Inagaki H."/>
            <person name="Ikema Y."/>
            <person name="Okamoto S."/>
            <person name="Okitani R."/>
            <person name="Kawakami T."/>
            <person name="Noguchi S."/>
            <person name="Itoh T."/>
            <person name="Shigeta K."/>
            <person name="Senba T."/>
            <person name="Matsumura K."/>
            <person name="Nakajima Y."/>
            <person name="Mizuno T."/>
            <person name="Morinaga M."/>
            <person name="Sasaki M."/>
            <person name="Togashi T."/>
            <person name="Oyama M."/>
            <person name="Hata H."/>
            <person name="Watanabe M."/>
            <person name="Komatsu T."/>
            <person name="Mizushima-Sugano J."/>
            <person name="Satoh T."/>
            <person name="Shirai Y."/>
            <person name="Takahashi Y."/>
            <person name="Nakagawa K."/>
            <person name="Okumura K."/>
            <person name="Nagase T."/>
            <person name="Nomura N."/>
            <person name="Kikuchi H."/>
            <person name="Masuho Y."/>
            <person name="Yamashita R."/>
            <person name="Nakai K."/>
            <person name="Yada T."/>
            <person name="Nakamura Y."/>
            <person name="Ohara O."/>
            <person name="Isogai T."/>
            <person name="Sugano S."/>
        </authorList>
    </citation>
    <scope>NUCLEOTIDE SEQUENCE [LARGE SCALE MRNA] OF 103-361</scope>
</reference>
<reference key="5">
    <citation type="journal article" date="2007" name="Science">
        <title>ATM and ATR substrate analysis reveals extensive protein networks responsive to DNA damage.</title>
        <authorList>
            <person name="Matsuoka S."/>
            <person name="Ballif B.A."/>
            <person name="Smogorzewska A."/>
            <person name="McDonald E.R. III"/>
            <person name="Hurov K.E."/>
            <person name="Luo J."/>
            <person name="Bakalarski C.E."/>
            <person name="Zhao Z."/>
            <person name="Solimini N."/>
            <person name="Lerenthal Y."/>
            <person name="Shiloh Y."/>
            <person name="Gygi S.P."/>
            <person name="Elledge S.J."/>
        </authorList>
    </citation>
    <scope>PHOSPHORYLATION [LARGE SCALE ANALYSIS] AT SER-146</scope>
    <scope>IDENTIFICATION BY MASS SPECTROMETRY [LARGE SCALE ANALYSIS]</scope>
    <source>
        <tissue>Embryonic kidney</tissue>
    </source>
</reference>
<reference key="6">
    <citation type="journal article" date="2009" name="Sci. Signal.">
        <title>Quantitative phosphoproteomic analysis of T cell receptor signaling reveals system-wide modulation of protein-protein interactions.</title>
        <authorList>
            <person name="Mayya V."/>
            <person name="Lundgren D.H."/>
            <person name="Hwang S.-I."/>
            <person name="Rezaul K."/>
            <person name="Wu L."/>
            <person name="Eng J.K."/>
            <person name="Rodionov V."/>
            <person name="Han D.K."/>
        </authorList>
    </citation>
    <scope>PHOSPHORYLATION [LARGE SCALE ANALYSIS] AT SER-355</scope>
    <scope>IDENTIFICATION BY MASS SPECTROMETRY [LARGE SCALE ANALYSIS]</scope>
    <source>
        <tissue>Leukemic T-cell</tissue>
    </source>
</reference>
<reference key="7">
    <citation type="journal article" date="2010" name="Sci. Signal.">
        <title>Quantitative phosphoproteomics reveals widespread full phosphorylation site occupancy during mitosis.</title>
        <authorList>
            <person name="Olsen J.V."/>
            <person name="Vermeulen M."/>
            <person name="Santamaria A."/>
            <person name="Kumar C."/>
            <person name="Miller M.L."/>
            <person name="Jensen L.J."/>
            <person name="Gnad F."/>
            <person name="Cox J."/>
            <person name="Jensen T.S."/>
            <person name="Nigg E.A."/>
            <person name="Brunak S."/>
            <person name="Mann M."/>
        </authorList>
    </citation>
    <scope>PHOSPHORYLATION [LARGE SCALE ANALYSIS] AT SER-355</scope>
    <scope>IDENTIFICATION BY MASS SPECTROMETRY [LARGE SCALE ANALYSIS]</scope>
    <source>
        <tissue>Cervix carcinoma</tissue>
    </source>
</reference>
<reference key="8">
    <citation type="journal article" date="2011" name="BMC Syst. Biol.">
        <title>Initial characterization of the human central proteome.</title>
        <authorList>
            <person name="Burkard T.R."/>
            <person name="Planyavsky M."/>
            <person name="Kaupe I."/>
            <person name="Breitwieser F.P."/>
            <person name="Buerckstuemmer T."/>
            <person name="Bennett K.L."/>
            <person name="Superti-Furga G."/>
            <person name="Colinge J."/>
        </authorList>
    </citation>
    <scope>IDENTIFICATION BY MASS SPECTROMETRY [LARGE SCALE ANALYSIS]</scope>
</reference>
<reference key="9">
    <citation type="journal article" date="2013" name="J. Proteome Res.">
        <title>Toward a comprehensive characterization of a human cancer cell phosphoproteome.</title>
        <authorList>
            <person name="Zhou H."/>
            <person name="Di Palma S."/>
            <person name="Preisinger C."/>
            <person name="Peng M."/>
            <person name="Polat A.N."/>
            <person name="Heck A.J."/>
            <person name="Mohammed S."/>
        </authorList>
    </citation>
    <scope>PHOSPHORYLATION [LARGE SCALE ANALYSIS] AT SER-340</scope>
    <scope>IDENTIFICATION BY MASS SPECTROMETRY [LARGE SCALE ANALYSIS]</scope>
    <source>
        <tissue>Cervix carcinoma</tissue>
    </source>
</reference>
<reference key="10">
    <citation type="submission" date="2004-11" db="PDB data bank">
        <title>Solution structure of the CS domain of human KIAA1068.</title>
        <authorList>
            <consortium name="RIKEN structural genomics initiative (RSGI)"/>
        </authorList>
    </citation>
    <scope>STRUCTURE BY NMR OF 176-286</scope>
</reference>
<keyword id="KW-0002">3D-structure</keyword>
<keyword id="KW-0597">Phosphoprotein</keyword>
<keyword id="KW-1267">Proteomics identification</keyword>
<keyword id="KW-1185">Reference proteome</keyword>
<organism>
    <name type="scientific">Homo sapiens</name>
    <name type="common">Human</name>
    <dbReference type="NCBI Taxonomy" id="9606"/>
    <lineage>
        <taxon>Eukaryota</taxon>
        <taxon>Metazoa</taxon>
        <taxon>Chordata</taxon>
        <taxon>Craniata</taxon>
        <taxon>Vertebrata</taxon>
        <taxon>Euteleostomi</taxon>
        <taxon>Mammalia</taxon>
        <taxon>Eutheria</taxon>
        <taxon>Euarchontoglires</taxon>
        <taxon>Primates</taxon>
        <taxon>Haplorrhini</taxon>
        <taxon>Catarrhini</taxon>
        <taxon>Hominidae</taxon>
        <taxon>Homo</taxon>
    </lineage>
</organism>
<feature type="chain" id="PRO_0000057985" description="NudC domain-containing protein 3">
    <location>
        <begin position="1"/>
        <end position="361"/>
    </location>
</feature>
<feature type="domain" description="CS" evidence="1">
    <location>
        <begin position="185"/>
        <end position="277"/>
    </location>
</feature>
<feature type="region of interest" description="Disordered" evidence="2">
    <location>
        <begin position="87"/>
        <end position="106"/>
    </location>
</feature>
<feature type="region of interest" description="Disordered" evidence="2">
    <location>
        <begin position="124"/>
        <end position="158"/>
    </location>
</feature>
<feature type="compositionally biased region" description="Basic and acidic residues" evidence="2">
    <location>
        <begin position="87"/>
        <end position="97"/>
    </location>
</feature>
<feature type="compositionally biased region" description="Low complexity" evidence="2">
    <location>
        <begin position="148"/>
        <end position="158"/>
    </location>
</feature>
<feature type="modified residue" description="Phosphoserine" evidence="5">
    <location>
        <position position="146"/>
    </location>
</feature>
<feature type="modified residue" description="Phosphoserine" evidence="8">
    <location>
        <position position="340"/>
    </location>
</feature>
<feature type="modified residue" description="Phosphoserine" evidence="6 7">
    <location>
        <position position="355"/>
    </location>
</feature>
<feature type="sequence variant" id="VAR_054036" description="In dbSNP:rs307007." evidence="3">
    <original>T</original>
    <variation>P</variation>
    <location>
        <position position="3"/>
    </location>
</feature>
<feature type="sequence variant" id="VAR_031709" description="In dbSNP:rs11550029." evidence="3">
    <original>R</original>
    <variation>C</variation>
    <location>
        <position position="235"/>
    </location>
</feature>
<feature type="sequence conflict" description="In Ref. 2; AAH35014." evidence="4" ref="2">
    <original>V</original>
    <variation>L</variation>
    <location>
        <position position="205"/>
    </location>
</feature>
<feature type="strand" evidence="9">
    <location>
        <begin position="179"/>
        <end position="185"/>
    </location>
</feature>
<feature type="strand" evidence="9">
    <location>
        <begin position="191"/>
        <end position="195"/>
    </location>
</feature>
<feature type="strand" evidence="9">
    <location>
        <begin position="198"/>
        <end position="204"/>
    </location>
</feature>
<feature type="helix" evidence="9">
    <location>
        <begin position="212"/>
        <end position="214"/>
    </location>
</feature>
<feature type="strand" evidence="9">
    <location>
        <begin position="215"/>
        <end position="219"/>
    </location>
</feature>
<feature type="strand" evidence="9">
    <location>
        <begin position="221"/>
        <end position="229"/>
    </location>
</feature>
<feature type="strand" evidence="9">
    <location>
        <begin position="231"/>
        <end position="244"/>
    </location>
</feature>
<feature type="turn" evidence="9">
    <location>
        <begin position="248"/>
        <end position="250"/>
    </location>
</feature>
<feature type="strand" evidence="9">
    <location>
        <begin position="252"/>
        <end position="255"/>
    </location>
</feature>
<feature type="strand" evidence="9">
    <location>
        <begin position="259"/>
        <end position="265"/>
    </location>
</feature>
<feature type="strand" evidence="9">
    <location>
        <begin position="267"/>
        <end position="270"/>
    </location>
</feature>
<name>NUDC3_HUMAN</name>